<evidence type="ECO:0000255" key="1">
    <source>
        <dbReference type="HAMAP-Rule" id="MF_01334"/>
    </source>
</evidence>
<evidence type="ECO:0000256" key="2">
    <source>
        <dbReference type="SAM" id="MobiDB-lite"/>
    </source>
</evidence>
<evidence type="ECO:0000305" key="3"/>
<proteinExistence type="inferred from homology"/>
<name>RL25_PARC0</name>
<organism>
    <name type="scientific">Paracidovorax citrulli (strain AAC00-1)</name>
    <name type="common">Acidovorax citrulli</name>
    <dbReference type="NCBI Taxonomy" id="397945"/>
    <lineage>
        <taxon>Bacteria</taxon>
        <taxon>Pseudomonadati</taxon>
        <taxon>Pseudomonadota</taxon>
        <taxon>Betaproteobacteria</taxon>
        <taxon>Burkholderiales</taxon>
        <taxon>Comamonadaceae</taxon>
        <taxon>Paracidovorax</taxon>
    </lineage>
</organism>
<sequence>MNFVAFERAKQGTGASRRLRNSGKTPGIVYGGSAEPQLIEVDHNALWHALKKEAFHSSVLDMELAGKTSKVLLRDVQYHPYKQLVLHIDFQRVDEKTKLHMKVPLHFTGAEESPAVKIDKCMVNPVATELDVSCMPSDLPEFINVDLSKLEKGRSLHLKDIKLPRGVSPVVRGGQQNPVLVSVVPPVAEVEAPAEGAAAPAPAPAKKGKK</sequence>
<reference key="1">
    <citation type="submission" date="2006-12" db="EMBL/GenBank/DDBJ databases">
        <title>Complete sequence of Acidovorax avenae subsp. citrulli AAC00-1.</title>
        <authorList>
            <person name="Copeland A."/>
            <person name="Lucas S."/>
            <person name="Lapidus A."/>
            <person name="Barry K."/>
            <person name="Detter J.C."/>
            <person name="Glavina del Rio T."/>
            <person name="Dalin E."/>
            <person name="Tice H."/>
            <person name="Pitluck S."/>
            <person name="Kiss H."/>
            <person name="Brettin T."/>
            <person name="Bruce D."/>
            <person name="Han C."/>
            <person name="Tapia R."/>
            <person name="Gilna P."/>
            <person name="Schmutz J."/>
            <person name="Larimer F."/>
            <person name="Land M."/>
            <person name="Hauser L."/>
            <person name="Kyrpides N."/>
            <person name="Kim E."/>
            <person name="Stahl D."/>
            <person name="Richardson P."/>
        </authorList>
    </citation>
    <scope>NUCLEOTIDE SEQUENCE [LARGE SCALE GENOMIC DNA]</scope>
    <source>
        <strain>AAC00-1</strain>
    </source>
</reference>
<feature type="chain" id="PRO_1000052860" description="Large ribosomal subunit protein bL25">
    <location>
        <begin position="1"/>
        <end position="210"/>
    </location>
</feature>
<feature type="region of interest" description="Disordered" evidence="2">
    <location>
        <begin position="191"/>
        <end position="210"/>
    </location>
</feature>
<feature type="compositionally biased region" description="Low complexity" evidence="2">
    <location>
        <begin position="191"/>
        <end position="200"/>
    </location>
</feature>
<protein>
    <recommendedName>
        <fullName evidence="1">Large ribosomal subunit protein bL25</fullName>
    </recommendedName>
    <alternativeName>
        <fullName evidence="3">50S ribosomal protein L25</fullName>
    </alternativeName>
    <alternativeName>
        <fullName evidence="1">General stress protein CTC</fullName>
    </alternativeName>
</protein>
<keyword id="KW-0687">Ribonucleoprotein</keyword>
<keyword id="KW-0689">Ribosomal protein</keyword>
<keyword id="KW-0694">RNA-binding</keyword>
<keyword id="KW-0699">rRNA-binding</keyword>
<gene>
    <name evidence="1" type="primary">rplY</name>
    <name evidence="1" type="synonym">ctc</name>
    <name type="ordered locus">Aave_3611</name>
</gene>
<accession>A1TT74</accession>
<comment type="function">
    <text evidence="1">This is one of the proteins that binds to the 5S RNA in the ribosome where it forms part of the central protuberance.</text>
</comment>
<comment type="subunit">
    <text evidence="1">Part of the 50S ribosomal subunit; part of the 5S rRNA/L5/L18/L25 subcomplex. Contacts the 5S rRNA. Binds to the 5S rRNA independently of L5 and L18.</text>
</comment>
<comment type="similarity">
    <text evidence="1">Belongs to the bacterial ribosomal protein bL25 family. CTC subfamily.</text>
</comment>
<dbReference type="EMBL" id="CP000512">
    <property type="protein sequence ID" value="ABM34162.1"/>
    <property type="molecule type" value="Genomic_DNA"/>
</dbReference>
<dbReference type="RefSeq" id="WP_011796659.1">
    <property type="nucleotide sequence ID" value="NC_008752.1"/>
</dbReference>
<dbReference type="SMR" id="A1TT74"/>
<dbReference type="STRING" id="397945.Aave_3611"/>
<dbReference type="GeneID" id="79791498"/>
<dbReference type="KEGG" id="aav:Aave_3611"/>
<dbReference type="eggNOG" id="COG1825">
    <property type="taxonomic scope" value="Bacteria"/>
</dbReference>
<dbReference type="HOGENOM" id="CLU_075939_0_1_4"/>
<dbReference type="OrthoDB" id="9806411at2"/>
<dbReference type="Proteomes" id="UP000002596">
    <property type="component" value="Chromosome"/>
</dbReference>
<dbReference type="GO" id="GO:0022625">
    <property type="term" value="C:cytosolic large ribosomal subunit"/>
    <property type="evidence" value="ECO:0007669"/>
    <property type="project" value="TreeGrafter"/>
</dbReference>
<dbReference type="GO" id="GO:0008097">
    <property type="term" value="F:5S rRNA binding"/>
    <property type="evidence" value="ECO:0007669"/>
    <property type="project" value="InterPro"/>
</dbReference>
<dbReference type="GO" id="GO:0003735">
    <property type="term" value="F:structural constituent of ribosome"/>
    <property type="evidence" value="ECO:0007669"/>
    <property type="project" value="InterPro"/>
</dbReference>
<dbReference type="GO" id="GO:0006412">
    <property type="term" value="P:translation"/>
    <property type="evidence" value="ECO:0007669"/>
    <property type="project" value="UniProtKB-UniRule"/>
</dbReference>
<dbReference type="CDD" id="cd00495">
    <property type="entry name" value="Ribosomal_L25_TL5_CTC"/>
    <property type="match status" value="1"/>
</dbReference>
<dbReference type="Gene3D" id="2.170.120.20">
    <property type="entry name" value="Ribosomal protein L25, beta domain"/>
    <property type="match status" value="1"/>
</dbReference>
<dbReference type="Gene3D" id="2.40.240.10">
    <property type="entry name" value="Ribosomal Protein L25, Chain P"/>
    <property type="match status" value="1"/>
</dbReference>
<dbReference type="HAMAP" id="MF_01336">
    <property type="entry name" value="Ribosomal_bL25"/>
    <property type="match status" value="1"/>
</dbReference>
<dbReference type="HAMAP" id="MF_01334">
    <property type="entry name" value="Ribosomal_bL25_CTC"/>
    <property type="match status" value="1"/>
</dbReference>
<dbReference type="InterPro" id="IPR020056">
    <property type="entry name" value="Rbsml_bL25/Gln-tRNA_synth_N"/>
</dbReference>
<dbReference type="InterPro" id="IPR011035">
    <property type="entry name" value="Ribosomal_bL25/Gln-tRNA_synth"/>
</dbReference>
<dbReference type="InterPro" id="IPR020057">
    <property type="entry name" value="Ribosomal_bL25_b-dom"/>
</dbReference>
<dbReference type="InterPro" id="IPR037121">
    <property type="entry name" value="Ribosomal_bL25_C"/>
</dbReference>
<dbReference type="InterPro" id="IPR001021">
    <property type="entry name" value="Ribosomal_bL25_long"/>
</dbReference>
<dbReference type="InterPro" id="IPR020055">
    <property type="entry name" value="Ribosomal_bL25_short"/>
</dbReference>
<dbReference type="InterPro" id="IPR029751">
    <property type="entry name" value="Ribosomal_L25_dom"/>
</dbReference>
<dbReference type="InterPro" id="IPR020930">
    <property type="entry name" value="Ribosomal_uL5_bac-type"/>
</dbReference>
<dbReference type="NCBIfam" id="TIGR00731">
    <property type="entry name" value="bL25_bact_ctc"/>
    <property type="match status" value="1"/>
</dbReference>
<dbReference type="NCBIfam" id="NF004128">
    <property type="entry name" value="PRK05618.1-2"/>
    <property type="match status" value="1"/>
</dbReference>
<dbReference type="NCBIfam" id="NF004130">
    <property type="entry name" value="PRK05618.1-5"/>
    <property type="match status" value="1"/>
</dbReference>
<dbReference type="NCBIfam" id="NF004612">
    <property type="entry name" value="PRK05943.1"/>
    <property type="match status" value="1"/>
</dbReference>
<dbReference type="PANTHER" id="PTHR33284">
    <property type="entry name" value="RIBOSOMAL PROTEIN L25/GLN-TRNA SYNTHETASE, ANTI-CODON-BINDING DOMAIN-CONTAINING PROTEIN"/>
    <property type="match status" value="1"/>
</dbReference>
<dbReference type="PANTHER" id="PTHR33284:SF1">
    <property type="entry name" value="RIBOSOMAL PROTEIN L25_GLN-TRNA SYNTHETASE, ANTI-CODON-BINDING DOMAIN-CONTAINING PROTEIN"/>
    <property type="match status" value="1"/>
</dbReference>
<dbReference type="Pfam" id="PF01386">
    <property type="entry name" value="Ribosomal_L25p"/>
    <property type="match status" value="1"/>
</dbReference>
<dbReference type="Pfam" id="PF14693">
    <property type="entry name" value="Ribosomal_TL5_C"/>
    <property type="match status" value="1"/>
</dbReference>
<dbReference type="SUPFAM" id="SSF50715">
    <property type="entry name" value="Ribosomal protein L25-like"/>
    <property type="match status" value="1"/>
</dbReference>